<gene>
    <name type="primary">fba</name>
    <name type="ordered locus">SP_0605</name>
</gene>
<dbReference type="EC" id="4.1.2.13"/>
<dbReference type="EMBL" id="AE005672">
    <property type="protein sequence ID" value="AAK74757.1"/>
    <property type="molecule type" value="Genomic_DNA"/>
</dbReference>
<dbReference type="PIR" id="D95070">
    <property type="entry name" value="D95070"/>
</dbReference>
<dbReference type="RefSeq" id="WP_001019003.1">
    <property type="nucleotide sequence ID" value="NZ_CP155539.1"/>
</dbReference>
<dbReference type="SMR" id="P0A4S1"/>
<dbReference type="PaxDb" id="170187-SP_0605"/>
<dbReference type="EnsemblBacteria" id="AAK74757">
    <property type="protein sequence ID" value="AAK74757"/>
    <property type="gene ID" value="SP_0605"/>
</dbReference>
<dbReference type="KEGG" id="spn:SP_0605"/>
<dbReference type="eggNOG" id="COG0191">
    <property type="taxonomic scope" value="Bacteria"/>
</dbReference>
<dbReference type="PhylomeDB" id="P0A4S1"/>
<dbReference type="BioCyc" id="SPNE170187:G1FZB-621-MONOMER"/>
<dbReference type="UniPathway" id="UPA00109">
    <property type="reaction ID" value="UER00183"/>
</dbReference>
<dbReference type="Proteomes" id="UP000000585">
    <property type="component" value="Chromosome"/>
</dbReference>
<dbReference type="GO" id="GO:0004332">
    <property type="term" value="F:fructose-bisphosphate aldolase activity"/>
    <property type="evidence" value="ECO:0007669"/>
    <property type="project" value="UniProtKB-EC"/>
</dbReference>
<dbReference type="GO" id="GO:0008270">
    <property type="term" value="F:zinc ion binding"/>
    <property type="evidence" value="ECO:0007669"/>
    <property type="project" value="InterPro"/>
</dbReference>
<dbReference type="GO" id="GO:0030388">
    <property type="term" value="P:fructose 1,6-bisphosphate metabolic process"/>
    <property type="evidence" value="ECO:0007669"/>
    <property type="project" value="InterPro"/>
</dbReference>
<dbReference type="GO" id="GO:0006096">
    <property type="term" value="P:glycolytic process"/>
    <property type="evidence" value="ECO:0007669"/>
    <property type="project" value="UniProtKB-UniPathway"/>
</dbReference>
<dbReference type="CDD" id="cd00947">
    <property type="entry name" value="TBP_aldolase_IIB"/>
    <property type="match status" value="1"/>
</dbReference>
<dbReference type="FunFam" id="3.20.20.70:FF:000111">
    <property type="entry name" value="Fructose-1,6-bisphosphate aldolase"/>
    <property type="match status" value="1"/>
</dbReference>
<dbReference type="Gene3D" id="3.20.20.70">
    <property type="entry name" value="Aldolase class I"/>
    <property type="match status" value="1"/>
</dbReference>
<dbReference type="InterPro" id="IPR013785">
    <property type="entry name" value="Aldolase_TIM"/>
</dbReference>
<dbReference type="InterPro" id="IPR050246">
    <property type="entry name" value="Class_II_FBP_aldolase"/>
</dbReference>
<dbReference type="InterPro" id="IPR000771">
    <property type="entry name" value="FBA_II"/>
</dbReference>
<dbReference type="InterPro" id="IPR011289">
    <property type="entry name" value="Fruc_bis_ald_class-2"/>
</dbReference>
<dbReference type="NCBIfam" id="TIGR00167">
    <property type="entry name" value="cbbA"/>
    <property type="match status" value="1"/>
</dbReference>
<dbReference type="NCBIfam" id="TIGR01859">
    <property type="entry name" value="fruc_bis_ald"/>
    <property type="match status" value="1"/>
</dbReference>
<dbReference type="NCBIfam" id="NF005590">
    <property type="entry name" value="PRK07315.1"/>
    <property type="match status" value="1"/>
</dbReference>
<dbReference type="PANTHER" id="PTHR30304">
    <property type="entry name" value="D-TAGATOSE-1,6-BISPHOSPHATE ALDOLASE"/>
    <property type="match status" value="1"/>
</dbReference>
<dbReference type="PANTHER" id="PTHR30304:SF0">
    <property type="entry name" value="D-TAGATOSE-1,6-BISPHOSPHATE ALDOLASE SUBUNIT GATY-RELATED"/>
    <property type="match status" value="1"/>
</dbReference>
<dbReference type="Pfam" id="PF01116">
    <property type="entry name" value="F_bP_aldolase"/>
    <property type="match status" value="1"/>
</dbReference>
<dbReference type="PIRSF" id="PIRSF001359">
    <property type="entry name" value="F_bP_aldolase_II"/>
    <property type="match status" value="1"/>
</dbReference>
<dbReference type="SUPFAM" id="SSF51569">
    <property type="entry name" value="Aldolase"/>
    <property type="match status" value="1"/>
</dbReference>
<dbReference type="PROSITE" id="PS00602">
    <property type="entry name" value="ALDOLASE_CLASS_II_1"/>
    <property type="match status" value="1"/>
</dbReference>
<dbReference type="PROSITE" id="PS00806">
    <property type="entry name" value="ALDOLASE_CLASS_II_2"/>
    <property type="match status" value="1"/>
</dbReference>
<reference key="1">
    <citation type="journal article" date="2001" name="Science">
        <title>Complete genome sequence of a virulent isolate of Streptococcus pneumoniae.</title>
        <authorList>
            <person name="Tettelin H."/>
            <person name="Nelson K.E."/>
            <person name="Paulsen I.T."/>
            <person name="Eisen J.A."/>
            <person name="Read T.D."/>
            <person name="Peterson S.N."/>
            <person name="Heidelberg J.F."/>
            <person name="DeBoy R.T."/>
            <person name="Haft D.H."/>
            <person name="Dodson R.J."/>
            <person name="Durkin A.S."/>
            <person name="Gwinn M.L."/>
            <person name="Kolonay J.F."/>
            <person name="Nelson W.C."/>
            <person name="Peterson J.D."/>
            <person name="Umayam L.A."/>
            <person name="White O."/>
            <person name="Salzberg S.L."/>
            <person name="Lewis M.R."/>
            <person name="Radune D."/>
            <person name="Holtzapple E.K."/>
            <person name="Khouri H.M."/>
            <person name="Wolf A.M."/>
            <person name="Utterback T.R."/>
            <person name="Hansen C.L."/>
            <person name="McDonald L.A."/>
            <person name="Feldblyum T.V."/>
            <person name="Angiuoli S.V."/>
            <person name="Dickinson T."/>
            <person name="Hickey E.K."/>
            <person name="Holt I.E."/>
            <person name="Loftus B.J."/>
            <person name="Yang F."/>
            <person name="Smith H.O."/>
            <person name="Venter J.C."/>
            <person name="Dougherty B.A."/>
            <person name="Morrison D.A."/>
            <person name="Hollingshead S.K."/>
            <person name="Fraser C.M."/>
        </authorList>
    </citation>
    <scope>NUCLEOTIDE SEQUENCE [LARGE SCALE GENOMIC DNA]</scope>
    <source>
        <strain>ATCC BAA-334 / TIGR4</strain>
    </source>
</reference>
<organism>
    <name type="scientific">Streptococcus pneumoniae serotype 4 (strain ATCC BAA-334 / TIGR4)</name>
    <dbReference type="NCBI Taxonomy" id="170187"/>
    <lineage>
        <taxon>Bacteria</taxon>
        <taxon>Bacillati</taxon>
        <taxon>Bacillota</taxon>
        <taxon>Bacilli</taxon>
        <taxon>Lactobacillales</taxon>
        <taxon>Streptococcaceae</taxon>
        <taxon>Streptococcus</taxon>
    </lineage>
</organism>
<protein>
    <recommendedName>
        <fullName>Fructose-bisphosphate aldolase</fullName>
        <shortName>FBP aldolase</shortName>
        <shortName>FBPA</shortName>
        <ecNumber>4.1.2.13</ecNumber>
    </recommendedName>
    <alternativeName>
        <fullName>Fructose-1,6-bisphosphate aldolase</fullName>
    </alternativeName>
</protein>
<evidence type="ECO:0000250" key="1"/>
<evidence type="ECO:0000305" key="2"/>
<keyword id="KW-0324">Glycolysis</keyword>
<keyword id="KW-0456">Lyase</keyword>
<keyword id="KW-0479">Metal-binding</keyword>
<keyword id="KW-1185">Reference proteome</keyword>
<keyword id="KW-0862">Zinc</keyword>
<name>ALF_STRPN</name>
<feature type="chain" id="PRO_0000178745" description="Fructose-bisphosphate aldolase">
    <location>
        <begin position="1"/>
        <end position="293"/>
    </location>
</feature>
<feature type="active site" description="Proton donor" evidence="1">
    <location>
        <position position="85"/>
    </location>
</feature>
<feature type="binding site" evidence="1">
    <location>
        <position position="50"/>
    </location>
    <ligand>
        <name>D-glyceraldehyde 3-phosphate</name>
        <dbReference type="ChEBI" id="CHEBI:59776"/>
    </ligand>
</feature>
<feature type="binding site" evidence="1">
    <location>
        <position position="86"/>
    </location>
    <ligand>
        <name>Zn(2+)</name>
        <dbReference type="ChEBI" id="CHEBI:29105"/>
        <label>1</label>
        <note>catalytic</note>
    </ligand>
</feature>
<feature type="binding site" evidence="1">
    <location>
        <position position="106"/>
    </location>
    <ligand>
        <name>Zn(2+)</name>
        <dbReference type="ChEBI" id="CHEBI:29105"/>
        <label>2</label>
    </ligand>
</feature>
<feature type="binding site" evidence="1">
    <location>
        <position position="136"/>
    </location>
    <ligand>
        <name>Zn(2+)</name>
        <dbReference type="ChEBI" id="CHEBI:29105"/>
        <label>2</label>
    </ligand>
</feature>
<feature type="binding site" evidence="1">
    <location>
        <position position="178"/>
    </location>
    <ligand>
        <name>Zn(2+)</name>
        <dbReference type="ChEBI" id="CHEBI:29105"/>
        <label>1</label>
        <note>catalytic</note>
    </ligand>
</feature>
<feature type="binding site" evidence="1">
    <location>
        <position position="179"/>
    </location>
    <ligand>
        <name>dihydroxyacetone phosphate</name>
        <dbReference type="ChEBI" id="CHEBI:57642"/>
    </ligand>
</feature>
<feature type="binding site" evidence="1">
    <location>
        <position position="208"/>
    </location>
    <ligand>
        <name>Zn(2+)</name>
        <dbReference type="ChEBI" id="CHEBI:29105"/>
        <label>1</label>
        <note>catalytic</note>
    </ligand>
</feature>
<feature type="binding site" evidence="1">
    <location>
        <begin position="209"/>
        <end position="211"/>
    </location>
    <ligand>
        <name>dihydroxyacetone phosphate</name>
        <dbReference type="ChEBI" id="CHEBI:57642"/>
    </ligand>
</feature>
<feature type="binding site" evidence="1">
    <location>
        <begin position="230"/>
        <end position="233"/>
    </location>
    <ligand>
        <name>dihydroxyacetone phosphate</name>
        <dbReference type="ChEBI" id="CHEBI:57642"/>
    </ligand>
</feature>
<comment type="function">
    <text evidence="1">Catalyzes the aldol condensation of dihydroxyacetone phosphate (DHAP or glycerone-phosphate) with glyceraldehyde 3-phosphate (G3P) to form fructose 1,6-bisphosphate (FBP) in gluconeogenesis and the reverse reaction in glycolysis.</text>
</comment>
<comment type="catalytic activity">
    <reaction>
        <text>beta-D-fructose 1,6-bisphosphate = D-glyceraldehyde 3-phosphate + dihydroxyacetone phosphate</text>
        <dbReference type="Rhea" id="RHEA:14729"/>
        <dbReference type="ChEBI" id="CHEBI:32966"/>
        <dbReference type="ChEBI" id="CHEBI:57642"/>
        <dbReference type="ChEBI" id="CHEBI:59776"/>
        <dbReference type="EC" id="4.1.2.13"/>
    </reaction>
</comment>
<comment type="cofactor">
    <cofactor evidence="1">
        <name>Zn(2+)</name>
        <dbReference type="ChEBI" id="CHEBI:29105"/>
    </cofactor>
    <text evidence="1">Binds 2 Zn(2+) ions per subunit. One is catalytic and the other provides a structural contribution.</text>
</comment>
<comment type="pathway">
    <text>Carbohydrate degradation; glycolysis; D-glyceraldehyde 3-phosphate and glycerone phosphate from D-glucose: step 4/4.</text>
</comment>
<comment type="similarity">
    <text evidence="2">Belongs to the class II fructose-bisphosphate aldolase family.</text>
</comment>
<proteinExistence type="inferred from homology"/>
<sequence length="293" mass="31402">MAIVSAEKFVQAARDNGYAVGGFNTNNLEWTQAILRAAEAKKAPVLIQTSMGAAKYMGGYKVARNLIANLVESMGITVPVAIHLDHGHYEDALECIEVGYTSIMFDGSHLPVEENLKLAKEVVEKAHAKGISVEAEVGTIGGEEDGIIGKGELAPIEDAKAMVETGIDFLAAGIGNIHGPYPVNWEGLDLDHLQKLTEALPGFPIVLHGGSGIPDEQIQAAIKLGVAKVNVNTECQIAFANATRKFARDYEANEAEYDKKKLFDPRKFLADGVKAIQASVEERIDVFGSEGKA</sequence>
<accession>P0A4S1</accession>
<accession>O65944</accession>